<sequence>MAYFLEQTDSEIFELIFEEYKRQNEHLEMIASENYTFASVMEAMGSVLTNKYAEGYPNKRYYGGCEVVDKIESLAIERAKKLFNCQFANVQAHSGSQANNAVYHALLKPYDKILGMDLSCGGHLTHGAKVSLTGKHYQSFSYGVNLDGYIDYEEALKIAQSVKPEIIVCGFSAYPREIDFKKFREIADEVGALLLGDIAHVAGLVVTGEHAHPFPHCHVVSSTTHKTLRGPRGGIILTNDEEIAAKIDKAIFPGTQGGPLMHVIAAKAVGFKENLKPEFKAYAQLVKSNMQVLAKALKEKNHKLVSGGTSNHLLLMDFLDKPYSGKDADIALGNAGITVNKNTIPGETRSPFVTSGIRIGSAALSARGMGAKEFEIIGNKISDILNDINNVSLQLHVKEELKAMVNQFPVYHQPIF</sequence>
<keyword id="KW-0002">3D-structure</keyword>
<keyword id="KW-0028">Amino-acid biosynthesis</keyword>
<keyword id="KW-0963">Cytoplasm</keyword>
<keyword id="KW-0554">One-carbon metabolism</keyword>
<keyword id="KW-0663">Pyridoxal phosphate</keyword>
<keyword id="KW-1185">Reference proteome</keyword>
<keyword id="KW-0808">Transferase</keyword>
<gene>
    <name evidence="1" type="primary">glyA</name>
    <name type="ordered locus">HP_0183</name>
</gene>
<organism>
    <name type="scientific">Helicobacter pylori (strain ATCC 700392 / 26695)</name>
    <name type="common">Campylobacter pylori</name>
    <dbReference type="NCBI Taxonomy" id="85962"/>
    <lineage>
        <taxon>Bacteria</taxon>
        <taxon>Pseudomonadati</taxon>
        <taxon>Campylobacterota</taxon>
        <taxon>Epsilonproteobacteria</taxon>
        <taxon>Campylobacterales</taxon>
        <taxon>Helicobacteraceae</taxon>
        <taxon>Helicobacter</taxon>
    </lineage>
</organism>
<proteinExistence type="evidence at protein level"/>
<dbReference type="EC" id="2.1.2.1" evidence="1"/>
<dbReference type="EMBL" id="AE000511">
    <property type="protein sequence ID" value="AAD07252.1"/>
    <property type="molecule type" value="Genomic_DNA"/>
</dbReference>
<dbReference type="PIR" id="G64542">
    <property type="entry name" value="G64542"/>
</dbReference>
<dbReference type="RefSeq" id="NP_206982.1">
    <property type="nucleotide sequence ID" value="NC_000915.1"/>
</dbReference>
<dbReference type="RefSeq" id="WP_000323092.1">
    <property type="nucleotide sequence ID" value="NC_018939.1"/>
</dbReference>
<dbReference type="PDB" id="6F93">
    <property type="method" value="X-ray"/>
    <property type="resolution" value="2.80 A"/>
    <property type="chains" value="A/B=1-416"/>
</dbReference>
<dbReference type="PDBsum" id="6F93"/>
<dbReference type="SMR" id="P56089"/>
<dbReference type="DIP" id="DIP-3405N"/>
<dbReference type="FunCoup" id="P56089">
    <property type="interactions" value="376"/>
</dbReference>
<dbReference type="IntAct" id="P56089">
    <property type="interactions" value="2"/>
</dbReference>
<dbReference type="MINT" id="P56089"/>
<dbReference type="STRING" id="85962.HP_0183"/>
<dbReference type="PaxDb" id="85962-C694_00910"/>
<dbReference type="EnsemblBacteria" id="AAD07252">
    <property type="protein sequence ID" value="AAD07252"/>
    <property type="gene ID" value="HP_0183"/>
</dbReference>
<dbReference type="KEGG" id="heo:C694_00910"/>
<dbReference type="KEGG" id="hpy:HP_0183"/>
<dbReference type="PATRIC" id="fig|85962.47.peg.198"/>
<dbReference type="eggNOG" id="COG0112">
    <property type="taxonomic scope" value="Bacteria"/>
</dbReference>
<dbReference type="InParanoid" id="P56089"/>
<dbReference type="OrthoDB" id="9803846at2"/>
<dbReference type="PhylomeDB" id="P56089"/>
<dbReference type="BRENDA" id="2.1.2.1">
    <property type="organism ID" value="2604"/>
</dbReference>
<dbReference type="UniPathway" id="UPA00193"/>
<dbReference type="UniPathway" id="UPA00288">
    <property type="reaction ID" value="UER01023"/>
</dbReference>
<dbReference type="Proteomes" id="UP000000429">
    <property type="component" value="Chromosome"/>
</dbReference>
<dbReference type="GO" id="GO:0005737">
    <property type="term" value="C:cytoplasm"/>
    <property type="evidence" value="ECO:0000318"/>
    <property type="project" value="GO_Central"/>
</dbReference>
<dbReference type="GO" id="GO:0005829">
    <property type="term" value="C:cytosol"/>
    <property type="evidence" value="ECO:0000318"/>
    <property type="project" value="GO_Central"/>
</dbReference>
<dbReference type="GO" id="GO:0004372">
    <property type="term" value="F:glycine hydroxymethyltransferase activity"/>
    <property type="evidence" value="ECO:0000318"/>
    <property type="project" value="GO_Central"/>
</dbReference>
<dbReference type="GO" id="GO:0030170">
    <property type="term" value="F:pyridoxal phosphate binding"/>
    <property type="evidence" value="ECO:0000318"/>
    <property type="project" value="GO_Central"/>
</dbReference>
<dbReference type="GO" id="GO:0019264">
    <property type="term" value="P:glycine biosynthetic process from serine"/>
    <property type="evidence" value="ECO:0000318"/>
    <property type="project" value="GO_Central"/>
</dbReference>
<dbReference type="GO" id="GO:0035999">
    <property type="term" value="P:tetrahydrofolate interconversion"/>
    <property type="evidence" value="ECO:0007669"/>
    <property type="project" value="UniProtKB-UniRule"/>
</dbReference>
<dbReference type="GO" id="GO:0046653">
    <property type="term" value="P:tetrahydrofolate metabolic process"/>
    <property type="evidence" value="ECO:0000318"/>
    <property type="project" value="GO_Central"/>
</dbReference>
<dbReference type="CDD" id="cd00378">
    <property type="entry name" value="SHMT"/>
    <property type="match status" value="1"/>
</dbReference>
<dbReference type="FunFam" id="3.40.640.10:FF:000001">
    <property type="entry name" value="Serine hydroxymethyltransferase"/>
    <property type="match status" value="1"/>
</dbReference>
<dbReference type="Gene3D" id="3.90.1150.10">
    <property type="entry name" value="Aspartate Aminotransferase, domain 1"/>
    <property type="match status" value="1"/>
</dbReference>
<dbReference type="Gene3D" id="3.40.640.10">
    <property type="entry name" value="Type I PLP-dependent aspartate aminotransferase-like (Major domain)"/>
    <property type="match status" value="1"/>
</dbReference>
<dbReference type="HAMAP" id="MF_00051">
    <property type="entry name" value="SHMT"/>
    <property type="match status" value="1"/>
</dbReference>
<dbReference type="InterPro" id="IPR015424">
    <property type="entry name" value="PyrdxlP-dep_Trfase"/>
</dbReference>
<dbReference type="InterPro" id="IPR015421">
    <property type="entry name" value="PyrdxlP-dep_Trfase_major"/>
</dbReference>
<dbReference type="InterPro" id="IPR015422">
    <property type="entry name" value="PyrdxlP-dep_Trfase_small"/>
</dbReference>
<dbReference type="InterPro" id="IPR001085">
    <property type="entry name" value="Ser_HO-MeTrfase"/>
</dbReference>
<dbReference type="InterPro" id="IPR049943">
    <property type="entry name" value="Ser_HO-MeTrfase-like"/>
</dbReference>
<dbReference type="InterPro" id="IPR019798">
    <property type="entry name" value="Ser_HO-MeTrfase_PLP_BS"/>
</dbReference>
<dbReference type="InterPro" id="IPR039429">
    <property type="entry name" value="SHMT-like_dom"/>
</dbReference>
<dbReference type="NCBIfam" id="NF000586">
    <property type="entry name" value="PRK00011.1"/>
    <property type="match status" value="1"/>
</dbReference>
<dbReference type="PANTHER" id="PTHR11680">
    <property type="entry name" value="SERINE HYDROXYMETHYLTRANSFERASE"/>
    <property type="match status" value="1"/>
</dbReference>
<dbReference type="PANTHER" id="PTHR11680:SF50">
    <property type="entry name" value="SERINE HYDROXYMETHYLTRANSFERASE"/>
    <property type="match status" value="1"/>
</dbReference>
<dbReference type="Pfam" id="PF00464">
    <property type="entry name" value="SHMT"/>
    <property type="match status" value="1"/>
</dbReference>
<dbReference type="PIRSF" id="PIRSF000412">
    <property type="entry name" value="SHMT"/>
    <property type="match status" value="1"/>
</dbReference>
<dbReference type="SUPFAM" id="SSF53383">
    <property type="entry name" value="PLP-dependent transferases"/>
    <property type="match status" value="1"/>
</dbReference>
<dbReference type="PROSITE" id="PS00096">
    <property type="entry name" value="SHMT"/>
    <property type="match status" value="1"/>
</dbReference>
<evidence type="ECO:0000255" key="1">
    <source>
        <dbReference type="HAMAP-Rule" id="MF_00051"/>
    </source>
</evidence>
<evidence type="ECO:0007829" key="2">
    <source>
        <dbReference type="PDB" id="6F93"/>
    </source>
</evidence>
<protein>
    <recommendedName>
        <fullName evidence="1">Serine hydroxymethyltransferase</fullName>
        <shortName evidence="1">SHMT</shortName>
        <shortName evidence="1">Serine methylase</shortName>
        <ecNumber evidence="1">2.1.2.1</ecNumber>
    </recommendedName>
</protein>
<comment type="function">
    <text evidence="1">Catalyzes the reversible interconversion of serine and glycine with tetrahydrofolate (THF) serving as the one-carbon carrier. This reaction serves as the major source of one-carbon groups required for the biosynthesis of purines, thymidylate, methionine, and other important biomolecules. Also exhibits THF-independent aldolase activity toward beta-hydroxyamino acids, producing glycine and aldehydes, via a retro-aldol mechanism.</text>
</comment>
<comment type="catalytic activity">
    <reaction evidence="1">
        <text>(6R)-5,10-methylene-5,6,7,8-tetrahydrofolate + glycine + H2O = (6S)-5,6,7,8-tetrahydrofolate + L-serine</text>
        <dbReference type="Rhea" id="RHEA:15481"/>
        <dbReference type="ChEBI" id="CHEBI:15377"/>
        <dbReference type="ChEBI" id="CHEBI:15636"/>
        <dbReference type="ChEBI" id="CHEBI:33384"/>
        <dbReference type="ChEBI" id="CHEBI:57305"/>
        <dbReference type="ChEBI" id="CHEBI:57453"/>
        <dbReference type="EC" id="2.1.2.1"/>
    </reaction>
</comment>
<comment type="cofactor">
    <cofactor evidence="1">
        <name>pyridoxal 5'-phosphate</name>
        <dbReference type="ChEBI" id="CHEBI:597326"/>
    </cofactor>
</comment>
<comment type="pathway">
    <text evidence="1">One-carbon metabolism; tetrahydrofolate interconversion.</text>
</comment>
<comment type="pathway">
    <text evidence="1">Amino-acid biosynthesis; glycine biosynthesis; glycine from L-serine: step 1/1.</text>
</comment>
<comment type="subunit">
    <text evidence="1">Homodimer.</text>
</comment>
<comment type="subcellular location">
    <subcellularLocation>
        <location evidence="1">Cytoplasm</location>
    </subcellularLocation>
</comment>
<comment type="similarity">
    <text evidence="1">Belongs to the SHMT family.</text>
</comment>
<reference key="1">
    <citation type="journal article" date="1997" name="Nature">
        <title>The complete genome sequence of the gastric pathogen Helicobacter pylori.</title>
        <authorList>
            <person name="Tomb J.-F."/>
            <person name="White O."/>
            <person name="Kerlavage A.R."/>
            <person name="Clayton R.A."/>
            <person name="Sutton G.G."/>
            <person name="Fleischmann R.D."/>
            <person name="Ketchum K.A."/>
            <person name="Klenk H.-P."/>
            <person name="Gill S.R."/>
            <person name="Dougherty B.A."/>
            <person name="Nelson K.E."/>
            <person name="Quackenbush J."/>
            <person name="Zhou L."/>
            <person name="Kirkness E.F."/>
            <person name="Peterson S.N."/>
            <person name="Loftus B.J."/>
            <person name="Richardson D.L."/>
            <person name="Dodson R.J."/>
            <person name="Khalak H.G."/>
            <person name="Glodek A."/>
            <person name="McKenney K."/>
            <person name="FitzGerald L.M."/>
            <person name="Lee N."/>
            <person name="Adams M.D."/>
            <person name="Hickey E.K."/>
            <person name="Berg D.E."/>
            <person name="Gocayne J.D."/>
            <person name="Utterback T.R."/>
            <person name="Peterson J.D."/>
            <person name="Kelley J.M."/>
            <person name="Cotton M.D."/>
            <person name="Weidman J.F."/>
            <person name="Fujii C."/>
            <person name="Bowman C."/>
            <person name="Watthey L."/>
            <person name="Wallin E."/>
            <person name="Hayes W.S."/>
            <person name="Borodovsky M."/>
            <person name="Karp P.D."/>
            <person name="Smith H.O."/>
            <person name="Fraser C.M."/>
            <person name="Venter J.C."/>
        </authorList>
    </citation>
    <scope>NUCLEOTIDE SEQUENCE [LARGE SCALE GENOMIC DNA]</scope>
    <source>
        <strain>ATCC 700392 / 26695</strain>
    </source>
</reference>
<name>GLYA_HELPY</name>
<feature type="chain" id="PRO_0000113586" description="Serine hydroxymethyltransferase">
    <location>
        <begin position="1"/>
        <end position="416"/>
    </location>
</feature>
<feature type="binding site" evidence="1">
    <location>
        <position position="118"/>
    </location>
    <ligand>
        <name>(6S)-5,6,7,8-tetrahydrofolate</name>
        <dbReference type="ChEBI" id="CHEBI:57453"/>
    </ligand>
</feature>
<feature type="binding site" evidence="1">
    <location>
        <begin position="122"/>
        <end position="124"/>
    </location>
    <ligand>
        <name>(6S)-5,6,7,8-tetrahydrofolate</name>
        <dbReference type="ChEBI" id="CHEBI:57453"/>
    </ligand>
</feature>
<feature type="binding site" evidence="1">
    <location>
        <position position="242"/>
    </location>
    <ligand>
        <name>(6S)-5,6,7,8-tetrahydrofolate</name>
        <dbReference type="ChEBI" id="CHEBI:57453"/>
    </ligand>
</feature>
<feature type="binding site" evidence="1">
    <location>
        <begin position="350"/>
        <end position="352"/>
    </location>
    <ligand>
        <name>(6S)-5,6,7,8-tetrahydrofolate</name>
        <dbReference type="ChEBI" id="CHEBI:57453"/>
    </ligand>
</feature>
<feature type="site" description="Plays an important role in substrate specificity" evidence="1">
    <location>
        <position position="225"/>
    </location>
</feature>
<feature type="modified residue" description="N6-(pyridoxal phosphate)lysine" evidence="1">
    <location>
        <position position="226"/>
    </location>
</feature>
<feature type="helix" evidence="2">
    <location>
        <begin position="5"/>
        <end position="8"/>
    </location>
</feature>
<feature type="helix" evidence="2">
    <location>
        <begin position="10"/>
        <end position="24"/>
    </location>
</feature>
<feature type="strand" evidence="2">
    <location>
        <begin position="25"/>
        <end position="28"/>
    </location>
</feature>
<feature type="helix" evidence="2">
    <location>
        <begin position="38"/>
        <end position="44"/>
    </location>
</feature>
<feature type="helix" evidence="2">
    <location>
        <begin position="47"/>
        <end position="49"/>
    </location>
</feature>
<feature type="helix" evidence="2">
    <location>
        <begin position="70"/>
        <end position="83"/>
    </location>
</feature>
<feature type="strand" evidence="2">
    <location>
        <begin position="86"/>
        <end position="89"/>
    </location>
</feature>
<feature type="helix" evidence="2">
    <location>
        <begin position="95"/>
        <end position="106"/>
    </location>
</feature>
<feature type="strand" evidence="2">
    <location>
        <begin position="112"/>
        <end position="116"/>
    </location>
</feature>
<feature type="strand" evidence="2">
    <location>
        <begin position="135"/>
        <end position="142"/>
    </location>
</feature>
<feature type="strand" evidence="2">
    <location>
        <begin position="148"/>
        <end position="150"/>
    </location>
</feature>
<feature type="helix" evidence="2">
    <location>
        <begin position="152"/>
        <end position="162"/>
    </location>
</feature>
<feature type="strand" evidence="2">
    <location>
        <begin position="165"/>
        <end position="169"/>
    </location>
</feature>
<feature type="helix" evidence="2">
    <location>
        <begin position="180"/>
        <end position="190"/>
    </location>
</feature>
<feature type="strand" evidence="2">
    <location>
        <begin position="193"/>
        <end position="197"/>
    </location>
</feature>
<feature type="turn" evidence="2">
    <location>
        <begin position="199"/>
        <end position="201"/>
    </location>
</feature>
<feature type="helix" evidence="2">
    <location>
        <begin position="202"/>
        <end position="206"/>
    </location>
</feature>
<feature type="turn" evidence="2">
    <location>
        <begin position="214"/>
        <end position="216"/>
    </location>
</feature>
<feature type="strand" evidence="2">
    <location>
        <begin position="218"/>
        <end position="225"/>
    </location>
</feature>
<feature type="helix" evidence="2">
    <location>
        <begin position="226"/>
        <end position="228"/>
    </location>
</feature>
<feature type="strand" evidence="2">
    <location>
        <begin position="234"/>
        <end position="239"/>
    </location>
</feature>
<feature type="helix" evidence="2">
    <location>
        <begin position="241"/>
        <end position="251"/>
    </location>
</feature>
<feature type="strand" evidence="2">
    <location>
        <begin position="255"/>
        <end position="258"/>
    </location>
</feature>
<feature type="helix" evidence="2">
    <location>
        <begin position="261"/>
        <end position="275"/>
    </location>
</feature>
<feature type="helix" evidence="2">
    <location>
        <begin position="277"/>
        <end position="299"/>
    </location>
</feature>
<feature type="helix" evidence="2">
    <location>
        <begin position="305"/>
        <end position="307"/>
    </location>
</feature>
<feature type="strand" evidence="2">
    <location>
        <begin position="310"/>
        <end position="317"/>
    </location>
</feature>
<feature type="strand" evidence="2">
    <location>
        <begin position="321"/>
        <end position="323"/>
    </location>
</feature>
<feature type="helix" evidence="2">
    <location>
        <begin position="325"/>
        <end position="334"/>
    </location>
</feature>
<feature type="turn" evidence="2">
    <location>
        <begin position="351"/>
        <end position="353"/>
    </location>
</feature>
<feature type="strand" evidence="2">
    <location>
        <begin position="355"/>
        <end position="360"/>
    </location>
</feature>
<feature type="helix" evidence="2">
    <location>
        <begin position="362"/>
        <end position="366"/>
    </location>
</feature>
<feature type="helix" evidence="2">
    <location>
        <begin position="371"/>
        <end position="385"/>
    </location>
</feature>
<feature type="turn" evidence="2">
    <location>
        <begin position="386"/>
        <end position="389"/>
    </location>
</feature>
<feature type="helix" evidence="2">
    <location>
        <begin position="391"/>
        <end position="405"/>
    </location>
</feature>
<accession>P56089</accession>